<keyword id="KW-0067">ATP-binding</keyword>
<keyword id="KW-0460">Magnesium</keyword>
<keyword id="KW-0464">Manganese</keyword>
<keyword id="KW-0479">Metal-binding</keyword>
<keyword id="KW-0547">Nucleotide-binding</keyword>
<keyword id="KW-0548">Nucleotidyltransferase</keyword>
<keyword id="KW-1185">Reference proteome</keyword>
<keyword id="KW-0808">Transferase</keyword>
<protein>
    <recommendedName>
        <fullName evidence="1">Protein nucleotidyltransferase YdiU</fullName>
        <ecNumber evidence="1">2.7.7.-</ecNumber>
    </recommendedName>
    <alternativeName>
        <fullName evidence="1">Protein adenylyltransferase YdiU</fullName>
        <ecNumber evidence="1">2.7.7.108</ecNumber>
    </alternativeName>
    <alternativeName>
        <fullName evidence="1">Protein uridylyltransferase YdiU</fullName>
        <ecNumber evidence="1">2.7.7.-</ecNumber>
    </alternativeName>
</protein>
<sequence>MKTLSQLVFNNTYSELPTTFGTAVIPQPLSDPFLVSVNPQVAEMLELDPLEAKTRLFINSFTGNKELAGTAPLAMKYTGHQFGHYNPDLGDGRGLLLGEVLTSTNAKWDIHLKGSGKTPYSRQGDGRAVLRSSIREYLGSAALNGLGIKTTHALALLGSTTLVSREKMERGATLIRVAESHLRFGHFEYLFYTHQHSELKLLADYLIKHHFPDLLTTESEQEDKQTASPNQHHNIYASMLTRIVELTAQLIAGWQSVGFAHGVMNTDNMSVLGLTFDYGPFGFLDDYNPDYICNHSDYSGRYAFNQQPSIALWNLSALGYALTPLIDKEDVDAILNRYHLTLQRDYSARMRNKLGLIEKREEDTVLFSSLFELLQSQMVDYTLFFRTLSSISATDLSVTSLPNSIERFDDLFTCTQPLEKWLKAYAVRLSFENDTSEKNGDTLRLTQMKLHNPKYILRNYLAQQAIDKAEDGDFTMIDELLQVLSSPFDEHLEFNQFADKPPYWGKKLEISCSS</sequence>
<proteinExistence type="inferred from homology"/>
<reference key="1">
    <citation type="journal article" date="2005" name="Science">
        <title>Life at depth: Photobacterium profundum genome sequence and expression analysis.</title>
        <authorList>
            <person name="Vezzi A."/>
            <person name="Campanaro S."/>
            <person name="D'Angelo M."/>
            <person name="Simonato F."/>
            <person name="Vitulo N."/>
            <person name="Lauro F.M."/>
            <person name="Cestaro A."/>
            <person name="Malacrida G."/>
            <person name="Simionati B."/>
            <person name="Cannata N."/>
            <person name="Romualdi C."/>
            <person name="Bartlett D.H."/>
            <person name="Valle G."/>
        </authorList>
    </citation>
    <scope>NUCLEOTIDE SEQUENCE [LARGE SCALE GENOMIC DNA]</scope>
    <source>
        <strain>ATCC BAA-1253 / SS9</strain>
    </source>
</reference>
<dbReference type="EC" id="2.7.7.-" evidence="1"/>
<dbReference type="EC" id="2.7.7.108" evidence="1"/>
<dbReference type="EMBL" id="CR378669">
    <property type="protein sequence ID" value="CAG20423.1"/>
    <property type="status" value="ALT_INIT"/>
    <property type="molecule type" value="Genomic_DNA"/>
</dbReference>
<dbReference type="RefSeq" id="WP_041394326.1">
    <property type="nucleotide sequence ID" value="NC_006370.1"/>
</dbReference>
<dbReference type="SMR" id="Q6LQK3"/>
<dbReference type="STRING" id="298386.PBPRA2020"/>
<dbReference type="KEGG" id="ppr:PBPRA2020"/>
<dbReference type="eggNOG" id="COG0397">
    <property type="taxonomic scope" value="Bacteria"/>
</dbReference>
<dbReference type="HOGENOM" id="CLU_010245_4_0_6"/>
<dbReference type="Proteomes" id="UP000000593">
    <property type="component" value="Chromosome 1"/>
</dbReference>
<dbReference type="GO" id="GO:0070733">
    <property type="term" value="F:AMPylase activity"/>
    <property type="evidence" value="ECO:0007669"/>
    <property type="project" value="TreeGrafter"/>
</dbReference>
<dbReference type="GO" id="GO:0005524">
    <property type="term" value="F:ATP binding"/>
    <property type="evidence" value="ECO:0007669"/>
    <property type="project" value="UniProtKB-UniRule"/>
</dbReference>
<dbReference type="GO" id="GO:0000287">
    <property type="term" value="F:magnesium ion binding"/>
    <property type="evidence" value="ECO:0007669"/>
    <property type="project" value="UniProtKB-UniRule"/>
</dbReference>
<dbReference type="HAMAP" id="MF_00692">
    <property type="entry name" value="YdiU_SelO"/>
    <property type="match status" value="1"/>
</dbReference>
<dbReference type="InterPro" id="IPR003846">
    <property type="entry name" value="SelO"/>
</dbReference>
<dbReference type="NCBIfam" id="NF000658">
    <property type="entry name" value="PRK00029.1"/>
    <property type="match status" value="1"/>
</dbReference>
<dbReference type="PANTHER" id="PTHR32057">
    <property type="entry name" value="PROTEIN ADENYLYLTRANSFERASE SELO, MITOCHONDRIAL"/>
    <property type="match status" value="1"/>
</dbReference>
<dbReference type="PANTHER" id="PTHR32057:SF14">
    <property type="entry name" value="PROTEIN ADENYLYLTRANSFERASE SELO, MITOCHONDRIAL"/>
    <property type="match status" value="1"/>
</dbReference>
<dbReference type="Pfam" id="PF02696">
    <property type="entry name" value="SelO"/>
    <property type="match status" value="1"/>
</dbReference>
<name>SELO_PHOPR</name>
<accession>Q6LQK3</accession>
<organism>
    <name type="scientific">Photobacterium profundum (strain SS9)</name>
    <dbReference type="NCBI Taxonomy" id="298386"/>
    <lineage>
        <taxon>Bacteria</taxon>
        <taxon>Pseudomonadati</taxon>
        <taxon>Pseudomonadota</taxon>
        <taxon>Gammaproteobacteria</taxon>
        <taxon>Vibrionales</taxon>
        <taxon>Vibrionaceae</taxon>
        <taxon>Photobacterium</taxon>
    </lineage>
</organism>
<evidence type="ECO:0000255" key="1">
    <source>
        <dbReference type="HAMAP-Rule" id="MF_00692"/>
    </source>
</evidence>
<evidence type="ECO:0000305" key="2"/>
<comment type="function">
    <text evidence="1">Nucleotidyltransferase involved in the post-translational modification of proteins. It can catalyze the addition of adenosine monophosphate (AMP) or uridine monophosphate (UMP) to a protein, resulting in modifications known as AMPylation and UMPylation.</text>
</comment>
<comment type="catalytic activity">
    <reaction evidence="1">
        <text>L-seryl-[protein] + ATP = 3-O-(5'-adenylyl)-L-seryl-[protein] + diphosphate</text>
        <dbReference type="Rhea" id="RHEA:58120"/>
        <dbReference type="Rhea" id="RHEA-COMP:9863"/>
        <dbReference type="Rhea" id="RHEA-COMP:15073"/>
        <dbReference type="ChEBI" id="CHEBI:29999"/>
        <dbReference type="ChEBI" id="CHEBI:30616"/>
        <dbReference type="ChEBI" id="CHEBI:33019"/>
        <dbReference type="ChEBI" id="CHEBI:142516"/>
        <dbReference type="EC" id="2.7.7.108"/>
    </reaction>
</comment>
<comment type="catalytic activity">
    <reaction evidence="1">
        <text>L-threonyl-[protein] + ATP = 3-O-(5'-adenylyl)-L-threonyl-[protein] + diphosphate</text>
        <dbReference type="Rhea" id="RHEA:54292"/>
        <dbReference type="Rhea" id="RHEA-COMP:11060"/>
        <dbReference type="Rhea" id="RHEA-COMP:13847"/>
        <dbReference type="ChEBI" id="CHEBI:30013"/>
        <dbReference type="ChEBI" id="CHEBI:30616"/>
        <dbReference type="ChEBI" id="CHEBI:33019"/>
        <dbReference type="ChEBI" id="CHEBI:138113"/>
        <dbReference type="EC" id="2.7.7.108"/>
    </reaction>
</comment>
<comment type="catalytic activity">
    <reaction evidence="1">
        <text>L-tyrosyl-[protein] + ATP = O-(5'-adenylyl)-L-tyrosyl-[protein] + diphosphate</text>
        <dbReference type="Rhea" id="RHEA:54288"/>
        <dbReference type="Rhea" id="RHEA-COMP:10136"/>
        <dbReference type="Rhea" id="RHEA-COMP:13846"/>
        <dbReference type="ChEBI" id="CHEBI:30616"/>
        <dbReference type="ChEBI" id="CHEBI:33019"/>
        <dbReference type="ChEBI" id="CHEBI:46858"/>
        <dbReference type="ChEBI" id="CHEBI:83624"/>
        <dbReference type="EC" id="2.7.7.108"/>
    </reaction>
</comment>
<comment type="catalytic activity">
    <reaction evidence="1">
        <text>L-histidyl-[protein] + UTP = N(tele)-(5'-uridylyl)-L-histidyl-[protein] + diphosphate</text>
        <dbReference type="Rhea" id="RHEA:83891"/>
        <dbReference type="Rhea" id="RHEA-COMP:9745"/>
        <dbReference type="Rhea" id="RHEA-COMP:20239"/>
        <dbReference type="ChEBI" id="CHEBI:29979"/>
        <dbReference type="ChEBI" id="CHEBI:33019"/>
        <dbReference type="ChEBI" id="CHEBI:46398"/>
        <dbReference type="ChEBI" id="CHEBI:233474"/>
    </reaction>
</comment>
<comment type="catalytic activity">
    <reaction evidence="1">
        <text>L-seryl-[protein] + UTP = O-(5'-uridylyl)-L-seryl-[protein] + diphosphate</text>
        <dbReference type="Rhea" id="RHEA:64604"/>
        <dbReference type="Rhea" id="RHEA-COMP:9863"/>
        <dbReference type="Rhea" id="RHEA-COMP:16635"/>
        <dbReference type="ChEBI" id="CHEBI:29999"/>
        <dbReference type="ChEBI" id="CHEBI:33019"/>
        <dbReference type="ChEBI" id="CHEBI:46398"/>
        <dbReference type="ChEBI" id="CHEBI:156051"/>
    </reaction>
</comment>
<comment type="catalytic activity">
    <reaction evidence="1">
        <text>L-tyrosyl-[protein] + UTP = O-(5'-uridylyl)-L-tyrosyl-[protein] + diphosphate</text>
        <dbReference type="Rhea" id="RHEA:83887"/>
        <dbReference type="Rhea" id="RHEA-COMP:10136"/>
        <dbReference type="Rhea" id="RHEA-COMP:20238"/>
        <dbReference type="ChEBI" id="CHEBI:33019"/>
        <dbReference type="ChEBI" id="CHEBI:46398"/>
        <dbReference type="ChEBI" id="CHEBI:46858"/>
        <dbReference type="ChEBI" id="CHEBI:90602"/>
    </reaction>
</comment>
<comment type="cofactor">
    <cofactor evidence="1">
        <name>Mg(2+)</name>
        <dbReference type="ChEBI" id="CHEBI:18420"/>
    </cofactor>
    <cofactor evidence="1">
        <name>Mn(2+)</name>
        <dbReference type="ChEBI" id="CHEBI:29035"/>
    </cofactor>
</comment>
<comment type="similarity">
    <text evidence="1">Belongs to the SELO family.</text>
</comment>
<comment type="sequence caution" evidence="2">
    <conflict type="erroneous initiation">
        <sequence resource="EMBL-CDS" id="CAG20423"/>
    </conflict>
</comment>
<feature type="chain" id="PRO_0000271842" description="Protein nucleotidyltransferase YdiU">
    <location>
        <begin position="1"/>
        <end position="514"/>
    </location>
</feature>
<feature type="active site" description="Proton acceptor" evidence="1">
    <location>
        <position position="267"/>
    </location>
</feature>
<feature type="binding site" evidence="1">
    <location>
        <position position="90"/>
    </location>
    <ligand>
        <name>ATP</name>
        <dbReference type="ChEBI" id="CHEBI:30616"/>
    </ligand>
</feature>
<feature type="binding site" evidence="1">
    <location>
        <position position="92"/>
    </location>
    <ligand>
        <name>ATP</name>
        <dbReference type="ChEBI" id="CHEBI:30616"/>
    </ligand>
</feature>
<feature type="binding site" evidence="1">
    <location>
        <position position="93"/>
    </location>
    <ligand>
        <name>ATP</name>
        <dbReference type="ChEBI" id="CHEBI:30616"/>
    </ligand>
</feature>
<feature type="binding site" evidence="1">
    <location>
        <position position="113"/>
    </location>
    <ligand>
        <name>ATP</name>
        <dbReference type="ChEBI" id="CHEBI:30616"/>
    </ligand>
</feature>
<feature type="binding site" evidence="1">
    <location>
        <position position="125"/>
    </location>
    <ligand>
        <name>ATP</name>
        <dbReference type="ChEBI" id="CHEBI:30616"/>
    </ligand>
</feature>
<feature type="binding site" evidence="1">
    <location>
        <position position="126"/>
    </location>
    <ligand>
        <name>ATP</name>
        <dbReference type="ChEBI" id="CHEBI:30616"/>
    </ligand>
</feature>
<feature type="binding site" evidence="1">
    <location>
        <position position="176"/>
    </location>
    <ligand>
        <name>ATP</name>
        <dbReference type="ChEBI" id="CHEBI:30616"/>
    </ligand>
</feature>
<feature type="binding site" evidence="1">
    <location>
        <position position="183"/>
    </location>
    <ligand>
        <name>ATP</name>
        <dbReference type="ChEBI" id="CHEBI:30616"/>
    </ligand>
</feature>
<feature type="binding site" evidence="1">
    <location>
        <position position="268"/>
    </location>
    <ligand>
        <name>Mg(2+)</name>
        <dbReference type="ChEBI" id="CHEBI:18420"/>
    </ligand>
</feature>
<feature type="binding site" evidence="1">
    <location>
        <position position="277"/>
    </location>
    <ligand>
        <name>ATP</name>
        <dbReference type="ChEBI" id="CHEBI:30616"/>
    </ligand>
</feature>
<feature type="binding site" evidence="1">
    <location>
        <position position="277"/>
    </location>
    <ligand>
        <name>Mg(2+)</name>
        <dbReference type="ChEBI" id="CHEBI:18420"/>
    </ligand>
</feature>
<gene>
    <name evidence="1" type="primary">ydiU</name>
    <name evidence="1" type="synonym">selO</name>
    <name type="ordered locus">PBPRA2020</name>
</gene>